<proteinExistence type="inferred from homology"/>
<accession>A2ST19</accession>
<sequence length="360" mass="38858">MEAKNNRILKDKTFDKSRWIQMPRDVIAGHDALLQLPNVITDLGVTGPLLLLSGKTTLQTVGLEVLRLLEDRQVTSAVVGEITYEEIARVEDLAQNIGAVLIIAVGGGRVIDTAKVVSYNLDIQFISVPTAASHDGIASSRASIMTADGNVSVAAHPPLAIVADTGIIAGAPHRLMAAGYADMVANYTAVMDWDLSKSKTGEQVSEYAMTLSMITAELMVENAEKIKAFDENAAWIVVKALFASGVAMSIAGSSRPASGGEHKFAHMLERLVPGKVLHGEACGVGTIISMIMHEGDWKKIRNSLRLIGAPTTPKDLGISDEIVIEAILRAKEIRPERYTIFDEDITREQAECLVARLYEE</sequence>
<organism>
    <name type="scientific">Methanocorpusculum labreanum (strain ATCC 43576 / DSM 4855 / Z)</name>
    <dbReference type="NCBI Taxonomy" id="410358"/>
    <lineage>
        <taxon>Archaea</taxon>
        <taxon>Methanobacteriati</taxon>
        <taxon>Methanobacteriota</taxon>
        <taxon>Stenosarchaea group</taxon>
        <taxon>Methanomicrobia</taxon>
        <taxon>Methanomicrobiales</taxon>
        <taxon>Methanocorpusculaceae</taxon>
        <taxon>Methanocorpusculum</taxon>
    </lineage>
</organism>
<evidence type="ECO:0000255" key="1">
    <source>
        <dbReference type="HAMAP-Rule" id="MF_00497"/>
    </source>
</evidence>
<comment type="function">
    <text evidence="1">Catalyzes the NAD(P)H-dependent reduction of dihydroxyacetonephosphate (DHAP or glycerone phosphate) to glycerol 1-phosphate (G1P). The G1P thus generated is used as the glycerophosphate backbone of phospholipids in the cellular membranes of Archaea.</text>
</comment>
<comment type="catalytic activity">
    <reaction evidence="1">
        <text>sn-glycerol 1-phosphate + NAD(+) = dihydroxyacetone phosphate + NADH + H(+)</text>
        <dbReference type="Rhea" id="RHEA:21412"/>
        <dbReference type="ChEBI" id="CHEBI:15378"/>
        <dbReference type="ChEBI" id="CHEBI:57540"/>
        <dbReference type="ChEBI" id="CHEBI:57642"/>
        <dbReference type="ChEBI" id="CHEBI:57685"/>
        <dbReference type="ChEBI" id="CHEBI:57945"/>
        <dbReference type="EC" id="1.1.1.261"/>
    </reaction>
</comment>
<comment type="catalytic activity">
    <reaction evidence="1">
        <text>sn-glycerol 1-phosphate + NADP(+) = dihydroxyacetone phosphate + NADPH + H(+)</text>
        <dbReference type="Rhea" id="RHEA:21416"/>
        <dbReference type="ChEBI" id="CHEBI:15378"/>
        <dbReference type="ChEBI" id="CHEBI:57642"/>
        <dbReference type="ChEBI" id="CHEBI:57685"/>
        <dbReference type="ChEBI" id="CHEBI:57783"/>
        <dbReference type="ChEBI" id="CHEBI:58349"/>
        <dbReference type="EC" id="1.1.1.261"/>
    </reaction>
</comment>
<comment type="cofactor">
    <cofactor evidence="1">
        <name>Zn(2+)</name>
        <dbReference type="ChEBI" id="CHEBI:29105"/>
    </cofactor>
    <text evidence="1">Binds 1 zinc ion per subunit.</text>
</comment>
<comment type="pathway">
    <text evidence="1">Membrane lipid metabolism; glycerophospholipid metabolism.</text>
</comment>
<comment type="subcellular location">
    <subcellularLocation>
        <location evidence="1">Cytoplasm</location>
    </subcellularLocation>
</comment>
<comment type="similarity">
    <text evidence="1">Belongs to the glycerol-1-phosphate dehydrogenase family.</text>
</comment>
<gene>
    <name evidence="1" type="primary">egsA</name>
    <name type="ordered locus">Mlab_1308</name>
</gene>
<name>G1PDH_METLZ</name>
<keyword id="KW-0963">Cytoplasm</keyword>
<keyword id="KW-0444">Lipid biosynthesis</keyword>
<keyword id="KW-0443">Lipid metabolism</keyword>
<keyword id="KW-0479">Metal-binding</keyword>
<keyword id="KW-0520">NAD</keyword>
<keyword id="KW-0521">NADP</keyword>
<keyword id="KW-0560">Oxidoreductase</keyword>
<keyword id="KW-0594">Phospholipid biosynthesis</keyword>
<keyword id="KW-1208">Phospholipid metabolism</keyword>
<keyword id="KW-1185">Reference proteome</keyword>
<keyword id="KW-0862">Zinc</keyword>
<protein>
    <recommendedName>
        <fullName evidence="1">Glycerol-1-phosphate dehydrogenase [NAD(P)+]</fullName>
        <shortName evidence="1">G1P dehydrogenase</shortName>
        <shortName evidence="1">G1PDH</shortName>
        <ecNumber evidence="1">1.1.1.261</ecNumber>
    </recommendedName>
    <alternativeName>
        <fullName evidence="1">Enantiomeric glycerophosphate synthase</fullName>
    </alternativeName>
    <alternativeName>
        <fullName evidence="1">sn-glycerol-1-phosphate dehydrogenase</fullName>
    </alternativeName>
</protein>
<feature type="chain" id="PRO_0000350652" description="Glycerol-1-phosphate dehydrogenase [NAD(P)+]">
    <location>
        <begin position="1"/>
        <end position="360"/>
    </location>
</feature>
<feature type="binding site" evidence="1">
    <location>
        <begin position="108"/>
        <end position="112"/>
    </location>
    <ligand>
        <name>NAD(+)</name>
        <dbReference type="ChEBI" id="CHEBI:57540"/>
    </ligand>
</feature>
<feature type="binding site" evidence="1">
    <location>
        <begin position="130"/>
        <end position="133"/>
    </location>
    <ligand>
        <name>NAD(+)</name>
        <dbReference type="ChEBI" id="CHEBI:57540"/>
    </ligand>
</feature>
<feature type="binding site" evidence="1">
    <location>
        <position position="135"/>
    </location>
    <ligand>
        <name>substrate</name>
    </ligand>
</feature>
<feature type="binding site" evidence="1">
    <location>
        <position position="139"/>
    </location>
    <ligand>
        <name>NAD(+)</name>
        <dbReference type="ChEBI" id="CHEBI:57540"/>
    </ligand>
</feature>
<feature type="binding site" evidence="1">
    <location>
        <position position="182"/>
    </location>
    <ligand>
        <name>substrate</name>
    </ligand>
</feature>
<feature type="binding site" evidence="1">
    <location>
        <position position="182"/>
    </location>
    <ligand>
        <name>Zn(2+)</name>
        <dbReference type="ChEBI" id="CHEBI:29105"/>
        <note>catalytic</note>
    </ligand>
</feature>
<feature type="binding site" evidence="1">
    <location>
        <position position="262"/>
    </location>
    <ligand>
        <name>Zn(2+)</name>
        <dbReference type="ChEBI" id="CHEBI:29105"/>
        <note>catalytic</note>
    </ligand>
</feature>
<feature type="binding site" evidence="1">
    <location>
        <position position="266"/>
    </location>
    <ligand>
        <name>substrate</name>
    </ligand>
</feature>
<feature type="binding site" evidence="1">
    <location>
        <position position="278"/>
    </location>
    <ligand>
        <name>Zn(2+)</name>
        <dbReference type="ChEBI" id="CHEBI:29105"/>
        <note>catalytic</note>
    </ligand>
</feature>
<reference key="1">
    <citation type="journal article" date="2009" name="Stand. Genomic Sci.">
        <title>Complete genome sequence of Methanocorpusculum labreanum type strain Z.</title>
        <authorList>
            <person name="Anderson I.J."/>
            <person name="Sieprawska-Lupa M."/>
            <person name="Goltsman E."/>
            <person name="Lapidus A."/>
            <person name="Copeland A."/>
            <person name="Glavina Del Rio T."/>
            <person name="Tice H."/>
            <person name="Dalin E."/>
            <person name="Barry K."/>
            <person name="Pitluck S."/>
            <person name="Hauser L."/>
            <person name="Land M."/>
            <person name="Lucas S."/>
            <person name="Richardson P."/>
            <person name="Whitman W.B."/>
            <person name="Kyrpides N.C."/>
        </authorList>
    </citation>
    <scope>NUCLEOTIDE SEQUENCE [LARGE SCALE GENOMIC DNA]</scope>
    <source>
        <strain>ATCC 43576 / DSM 4855 / Z</strain>
    </source>
</reference>
<dbReference type="EC" id="1.1.1.261" evidence="1"/>
<dbReference type="EMBL" id="CP000559">
    <property type="protein sequence ID" value="ABN07475.1"/>
    <property type="molecule type" value="Genomic_DNA"/>
</dbReference>
<dbReference type="RefSeq" id="WP_011833678.1">
    <property type="nucleotide sequence ID" value="NC_008942.1"/>
</dbReference>
<dbReference type="SMR" id="A2ST19"/>
<dbReference type="STRING" id="410358.Mlab_1308"/>
<dbReference type="GeneID" id="4794656"/>
<dbReference type="KEGG" id="mla:Mlab_1308"/>
<dbReference type="eggNOG" id="arCOG00982">
    <property type="taxonomic scope" value="Archaea"/>
</dbReference>
<dbReference type="HOGENOM" id="CLU_038362_0_0_2"/>
<dbReference type="OrthoDB" id="8656at2157"/>
<dbReference type="UniPathway" id="UPA00940"/>
<dbReference type="Proteomes" id="UP000000365">
    <property type="component" value="Chromosome"/>
</dbReference>
<dbReference type="GO" id="GO:0005737">
    <property type="term" value="C:cytoplasm"/>
    <property type="evidence" value="ECO:0007669"/>
    <property type="project" value="UniProtKB-SubCell"/>
</dbReference>
<dbReference type="GO" id="GO:0106357">
    <property type="term" value="F:glycerol-1-phosphate dehydrogenase (NAD+) activity"/>
    <property type="evidence" value="ECO:0007669"/>
    <property type="project" value="RHEA"/>
</dbReference>
<dbReference type="GO" id="GO:0106358">
    <property type="term" value="F:glycerol-1-phosphate dehydrogenase (NADP+) activity"/>
    <property type="evidence" value="ECO:0007669"/>
    <property type="project" value="RHEA"/>
</dbReference>
<dbReference type="GO" id="GO:0046872">
    <property type="term" value="F:metal ion binding"/>
    <property type="evidence" value="ECO:0007669"/>
    <property type="project" value="UniProtKB-KW"/>
</dbReference>
<dbReference type="GO" id="GO:0006650">
    <property type="term" value="P:glycerophospholipid metabolic process"/>
    <property type="evidence" value="ECO:0007669"/>
    <property type="project" value="UniProtKB-UniRule"/>
</dbReference>
<dbReference type="GO" id="GO:0008654">
    <property type="term" value="P:phospholipid biosynthetic process"/>
    <property type="evidence" value="ECO:0007669"/>
    <property type="project" value="UniProtKB-KW"/>
</dbReference>
<dbReference type="CDD" id="cd08173">
    <property type="entry name" value="Gro1PDH"/>
    <property type="match status" value="1"/>
</dbReference>
<dbReference type="Gene3D" id="3.40.50.1970">
    <property type="match status" value="1"/>
</dbReference>
<dbReference type="Gene3D" id="1.20.1090.10">
    <property type="entry name" value="Dehydroquinate synthase-like - alpha domain"/>
    <property type="match status" value="1"/>
</dbReference>
<dbReference type="HAMAP" id="MF_00497_A">
    <property type="entry name" value="G1P_dehydrogenase_A"/>
    <property type="match status" value="1"/>
</dbReference>
<dbReference type="InterPro" id="IPR023002">
    <property type="entry name" value="G1P_dehydrogenase_arc"/>
</dbReference>
<dbReference type="InterPro" id="IPR032837">
    <property type="entry name" value="G1PDH"/>
</dbReference>
<dbReference type="InterPro" id="IPR016205">
    <property type="entry name" value="Glycerol_DH"/>
</dbReference>
<dbReference type="NCBIfam" id="NF002022">
    <property type="entry name" value="PRK00843.1"/>
    <property type="match status" value="1"/>
</dbReference>
<dbReference type="PANTHER" id="PTHR43616">
    <property type="entry name" value="GLYCEROL DEHYDROGENASE"/>
    <property type="match status" value="1"/>
</dbReference>
<dbReference type="PANTHER" id="PTHR43616:SF5">
    <property type="entry name" value="GLYCEROL DEHYDROGENASE 1"/>
    <property type="match status" value="1"/>
</dbReference>
<dbReference type="Pfam" id="PF13685">
    <property type="entry name" value="Fe-ADH_2"/>
    <property type="match status" value="1"/>
</dbReference>
<dbReference type="PIRSF" id="PIRSF000112">
    <property type="entry name" value="Glycerol_dehydrogenase"/>
    <property type="match status" value="1"/>
</dbReference>
<dbReference type="SUPFAM" id="SSF56796">
    <property type="entry name" value="Dehydroquinate synthase-like"/>
    <property type="match status" value="1"/>
</dbReference>